<reference key="1">
    <citation type="journal article" date="2006" name="J. Bacteriol.">
        <title>Pathogenomic sequence analysis of Bacillus cereus and Bacillus thuringiensis isolates closely related to Bacillus anthracis.</title>
        <authorList>
            <person name="Han C.S."/>
            <person name="Xie G."/>
            <person name="Challacombe J.F."/>
            <person name="Altherr M.R."/>
            <person name="Bhotika S.S."/>
            <person name="Bruce D."/>
            <person name="Campbell C.S."/>
            <person name="Campbell M.L."/>
            <person name="Chen J."/>
            <person name="Chertkov O."/>
            <person name="Cleland C."/>
            <person name="Dimitrijevic M."/>
            <person name="Doggett N.A."/>
            <person name="Fawcett J.J."/>
            <person name="Glavina T."/>
            <person name="Goodwin L.A."/>
            <person name="Hill K.K."/>
            <person name="Hitchcock P."/>
            <person name="Jackson P.J."/>
            <person name="Keim P."/>
            <person name="Kewalramani A.R."/>
            <person name="Longmire J."/>
            <person name="Lucas S."/>
            <person name="Malfatti S."/>
            <person name="McMurry K."/>
            <person name="Meincke L.J."/>
            <person name="Misra M."/>
            <person name="Moseman B.L."/>
            <person name="Mundt M."/>
            <person name="Munk A.C."/>
            <person name="Okinaka R.T."/>
            <person name="Parson-Quintana B."/>
            <person name="Reilly L.P."/>
            <person name="Richardson P."/>
            <person name="Robinson D.L."/>
            <person name="Rubin E."/>
            <person name="Saunders E."/>
            <person name="Tapia R."/>
            <person name="Tesmer J.G."/>
            <person name="Thayer N."/>
            <person name="Thompson L.S."/>
            <person name="Tice H."/>
            <person name="Ticknor L.O."/>
            <person name="Wills P.L."/>
            <person name="Brettin T.S."/>
            <person name="Gilna P."/>
        </authorList>
    </citation>
    <scope>NUCLEOTIDE SEQUENCE [LARGE SCALE GENOMIC DNA]</scope>
    <source>
        <strain>97-27</strain>
    </source>
</reference>
<accession>Q6HEQ1</accession>
<name>MRAY_BACHK</name>
<feature type="chain" id="PRO_0000108780" description="Phospho-N-acetylmuramoyl-pentapeptide-transferase">
    <location>
        <begin position="1"/>
        <end position="324"/>
    </location>
</feature>
<feature type="transmembrane region" description="Helical" evidence="1">
    <location>
        <begin position="5"/>
        <end position="25"/>
    </location>
</feature>
<feature type="transmembrane region" description="Helical" evidence="1">
    <location>
        <begin position="52"/>
        <end position="72"/>
    </location>
</feature>
<feature type="transmembrane region" description="Helical" evidence="1">
    <location>
        <begin position="77"/>
        <end position="97"/>
    </location>
</feature>
<feature type="transmembrane region" description="Helical" evidence="1">
    <location>
        <begin position="122"/>
        <end position="142"/>
    </location>
</feature>
<feature type="transmembrane region" description="Helical" evidence="1">
    <location>
        <begin position="149"/>
        <end position="169"/>
    </location>
</feature>
<feature type="transmembrane region" description="Helical" evidence="1">
    <location>
        <begin position="176"/>
        <end position="196"/>
    </location>
</feature>
<feature type="transmembrane region" description="Helical" evidence="1">
    <location>
        <begin position="201"/>
        <end position="221"/>
    </location>
</feature>
<feature type="transmembrane region" description="Helical" evidence="1">
    <location>
        <begin position="227"/>
        <end position="247"/>
    </location>
</feature>
<feature type="transmembrane region" description="Helical" evidence="1">
    <location>
        <begin position="253"/>
        <end position="273"/>
    </location>
</feature>
<feature type="transmembrane region" description="Helical" evidence="1">
    <location>
        <begin position="302"/>
        <end position="322"/>
    </location>
</feature>
<organism>
    <name type="scientific">Bacillus thuringiensis subsp. konkukian (strain 97-27)</name>
    <dbReference type="NCBI Taxonomy" id="281309"/>
    <lineage>
        <taxon>Bacteria</taxon>
        <taxon>Bacillati</taxon>
        <taxon>Bacillota</taxon>
        <taxon>Bacilli</taxon>
        <taxon>Bacillales</taxon>
        <taxon>Bacillaceae</taxon>
        <taxon>Bacillus</taxon>
        <taxon>Bacillus cereus group</taxon>
    </lineage>
</organism>
<proteinExistence type="inferred from homology"/>
<protein>
    <recommendedName>
        <fullName evidence="1">Phospho-N-acetylmuramoyl-pentapeptide-transferase</fullName>
        <ecNumber evidence="1">2.7.8.13</ecNumber>
    </recommendedName>
    <alternativeName>
        <fullName evidence="1">UDP-MurNAc-pentapeptide phosphotransferase</fullName>
    </alternativeName>
</protein>
<evidence type="ECO:0000255" key="1">
    <source>
        <dbReference type="HAMAP-Rule" id="MF_00038"/>
    </source>
</evidence>
<keyword id="KW-0131">Cell cycle</keyword>
<keyword id="KW-0132">Cell division</keyword>
<keyword id="KW-1003">Cell membrane</keyword>
<keyword id="KW-0133">Cell shape</keyword>
<keyword id="KW-0961">Cell wall biogenesis/degradation</keyword>
<keyword id="KW-0460">Magnesium</keyword>
<keyword id="KW-0472">Membrane</keyword>
<keyword id="KW-0479">Metal-binding</keyword>
<keyword id="KW-0573">Peptidoglycan synthesis</keyword>
<keyword id="KW-0808">Transferase</keyword>
<keyword id="KW-0812">Transmembrane</keyword>
<keyword id="KW-1133">Transmembrane helix</keyword>
<sequence>MLEQGLLVTAGVAFLISVALSPLFIPFLRKLKFGQSIRDEGPKSHQKKSGTPTMGGIVIYVSMMVTSLIMAIKFNHLGAEVSLLLLVTFGYGLIGFLDDYIKVVKKRNLGLTSKQKLVGQLVIAIAFFLIGKGQAFHTYIMIPGTDVKFELGWAYFVLVLFMLIGGSNAVNLTDGLDGLLSGTAAIAFGAFSIIAVAQEQFGVAIFCMAVVGAVLGFLVFNANPAKVFMGDTGSLALGGAIAAVAILLKQELLLVIIGGVFVMETLSVIIQVISFKTTGKRVFKMSPLHHHYELCGWSEWRVVVTFWSVGFLLAVLGIYIGVWM</sequence>
<dbReference type="EC" id="2.7.8.13" evidence="1"/>
<dbReference type="EMBL" id="AE017355">
    <property type="protein sequence ID" value="AAT60648.1"/>
    <property type="molecule type" value="Genomic_DNA"/>
</dbReference>
<dbReference type="RefSeq" id="WP_000893058.1">
    <property type="nucleotide sequence ID" value="NC_005957.1"/>
</dbReference>
<dbReference type="RefSeq" id="YP_037975.1">
    <property type="nucleotide sequence ID" value="NC_005957.1"/>
</dbReference>
<dbReference type="SMR" id="Q6HEQ1"/>
<dbReference type="GeneID" id="92799814"/>
<dbReference type="KEGG" id="btk:BT9727_3655"/>
<dbReference type="PATRIC" id="fig|281309.8.peg.3894"/>
<dbReference type="HOGENOM" id="CLU_023982_0_1_9"/>
<dbReference type="UniPathway" id="UPA00219"/>
<dbReference type="Proteomes" id="UP000001301">
    <property type="component" value="Chromosome"/>
</dbReference>
<dbReference type="GO" id="GO:0005886">
    <property type="term" value="C:plasma membrane"/>
    <property type="evidence" value="ECO:0007669"/>
    <property type="project" value="UniProtKB-SubCell"/>
</dbReference>
<dbReference type="GO" id="GO:0046872">
    <property type="term" value="F:metal ion binding"/>
    <property type="evidence" value="ECO:0007669"/>
    <property type="project" value="UniProtKB-KW"/>
</dbReference>
<dbReference type="GO" id="GO:0008963">
    <property type="term" value="F:phospho-N-acetylmuramoyl-pentapeptide-transferase activity"/>
    <property type="evidence" value="ECO:0007669"/>
    <property type="project" value="UniProtKB-UniRule"/>
</dbReference>
<dbReference type="GO" id="GO:0051992">
    <property type="term" value="F:UDP-N-acetylmuramoyl-L-alanyl-D-glutamyl-meso-2,6-diaminopimelyl-D-alanyl-D-alanine:undecaprenyl-phosphate transferase activity"/>
    <property type="evidence" value="ECO:0007669"/>
    <property type="project" value="RHEA"/>
</dbReference>
<dbReference type="GO" id="GO:0051301">
    <property type="term" value="P:cell division"/>
    <property type="evidence" value="ECO:0007669"/>
    <property type="project" value="UniProtKB-KW"/>
</dbReference>
<dbReference type="GO" id="GO:0071555">
    <property type="term" value="P:cell wall organization"/>
    <property type="evidence" value="ECO:0007669"/>
    <property type="project" value="UniProtKB-KW"/>
</dbReference>
<dbReference type="GO" id="GO:0009252">
    <property type="term" value="P:peptidoglycan biosynthetic process"/>
    <property type="evidence" value="ECO:0007669"/>
    <property type="project" value="UniProtKB-UniRule"/>
</dbReference>
<dbReference type="GO" id="GO:0008360">
    <property type="term" value="P:regulation of cell shape"/>
    <property type="evidence" value="ECO:0007669"/>
    <property type="project" value="UniProtKB-KW"/>
</dbReference>
<dbReference type="CDD" id="cd06852">
    <property type="entry name" value="GT_MraY"/>
    <property type="match status" value="1"/>
</dbReference>
<dbReference type="HAMAP" id="MF_00038">
    <property type="entry name" value="MraY"/>
    <property type="match status" value="1"/>
</dbReference>
<dbReference type="InterPro" id="IPR000715">
    <property type="entry name" value="Glycosyl_transferase_4"/>
</dbReference>
<dbReference type="InterPro" id="IPR003524">
    <property type="entry name" value="PNAcMuramoyl-5peptid_Trfase"/>
</dbReference>
<dbReference type="InterPro" id="IPR018480">
    <property type="entry name" value="PNAcMuramoyl-5peptid_Trfase_CS"/>
</dbReference>
<dbReference type="NCBIfam" id="TIGR00445">
    <property type="entry name" value="mraY"/>
    <property type="match status" value="1"/>
</dbReference>
<dbReference type="PANTHER" id="PTHR22926">
    <property type="entry name" value="PHOSPHO-N-ACETYLMURAMOYL-PENTAPEPTIDE-TRANSFERASE"/>
    <property type="match status" value="1"/>
</dbReference>
<dbReference type="PANTHER" id="PTHR22926:SF5">
    <property type="entry name" value="PHOSPHO-N-ACETYLMURAMOYL-PENTAPEPTIDE-TRANSFERASE HOMOLOG"/>
    <property type="match status" value="1"/>
</dbReference>
<dbReference type="Pfam" id="PF00953">
    <property type="entry name" value="Glycos_transf_4"/>
    <property type="match status" value="1"/>
</dbReference>
<dbReference type="Pfam" id="PF10555">
    <property type="entry name" value="MraY_sig1"/>
    <property type="match status" value="1"/>
</dbReference>
<dbReference type="PROSITE" id="PS01348">
    <property type="entry name" value="MRAY_2"/>
    <property type="match status" value="1"/>
</dbReference>
<comment type="function">
    <text evidence="1">Catalyzes the initial step of the lipid cycle reactions in the biosynthesis of the cell wall peptidoglycan: transfers peptidoglycan precursor phospho-MurNAc-pentapeptide from UDP-MurNAc-pentapeptide onto the lipid carrier undecaprenyl phosphate, yielding undecaprenyl-pyrophosphoryl-MurNAc-pentapeptide, known as lipid I.</text>
</comment>
<comment type="catalytic activity">
    <reaction evidence="1">
        <text>UDP-N-acetyl-alpha-D-muramoyl-L-alanyl-gamma-D-glutamyl-meso-2,6-diaminopimeloyl-D-alanyl-D-alanine + di-trans,octa-cis-undecaprenyl phosphate = di-trans,octa-cis-undecaprenyl diphospho-N-acetyl-alpha-D-muramoyl-L-alanyl-D-glutamyl-meso-2,6-diaminopimeloyl-D-alanyl-D-alanine + UMP</text>
        <dbReference type="Rhea" id="RHEA:28386"/>
        <dbReference type="ChEBI" id="CHEBI:57865"/>
        <dbReference type="ChEBI" id="CHEBI:60392"/>
        <dbReference type="ChEBI" id="CHEBI:61386"/>
        <dbReference type="ChEBI" id="CHEBI:61387"/>
        <dbReference type="EC" id="2.7.8.13"/>
    </reaction>
</comment>
<comment type="cofactor">
    <cofactor evidence="1">
        <name>Mg(2+)</name>
        <dbReference type="ChEBI" id="CHEBI:18420"/>
    </cofactor>
</comment>
<comment type="pathway">
    <text evidence="1">Cell wall biogenesis; peptidoglycan biosynthesis.</text>
</comment>
<comment type="subcellular location">
    <subcellularLocation>
        <location evidence="1">Cell membrane</location>
        <topology evidence="1">Multi-pass membrane protein</topology>
    </subcellularLocation>
</comment>
<comment type="similarity">
    <text evidence="1">Belongs to the glycosyltransferase 4 family. MraY subfamily.</text>
</comment>
<gene>
    <name evidence="1" type="primary">mraY</name>
    <name type="ordered locus">BT9727_3655</name>
</gene>